<gene>
    <name evidence="1" type="primary">nanT</name>
    <name type="ordered locus">ECDH10B_3401</name>
</gene>
<protein>
    <recommendedName>
        <fullName evidence="1">Sialic acid transporter NanT</fullName>
    </recommendedName>
    <alternativeName>
        <fullName evidence="1">Sialic acid permease</fullName>
    </alternativeName>
    <alternativeName>
        <fullName evidence="1">Sialic acid/H(+) symporter</fullName>
    </alternativeName>
</protein>
<accession>B1XHJ7</accession>
<comment type="function">
    <text evidence="1">Catalyzes the proton-dependent transport of sialic acid.</text>
</comment>
<comment type="catalytic activity">
    <reaction evidence="1">
        <text>N-acetylneuraminate(in) + H(+)(in) = N-acetylneuraminate(out) + H(+)(out)</text>
        <dbReference type="Rhea" id="RHEA:28987"/>
        <dbReference type="ChEBI" id="CHEBI:15378"/>
        <dbReference type="ChEBI" id="CHEBI:35418"/>
    </reaction>
</comment>
<comment type="subcellular location">
    <subcellularLocation>
        <location evidence="1">Cell inner membrane</location>
        <topology evidence="1">Multi-pass membrane protein</topology>
    </subcellularLocation>
</comment>
<comment type="similarity">
    <text evidence="1">Belongs to the major facilitator superfamily. Sialate:H(+) symporter (SHS) (TC 2.A.1.12) family.</text>
</comment>
<evidence type="ECO:0000255" key="1">
    <source>
        <dbReference type="HAMAP-Rule" id="MF_01238"/>
    </source>
</evidence>
<keyword id="KW-0997">Cell inner membrane</keyword>
<keyword id="KW-1003">Cell membrane</keyword>
<keyword id="KW-0472">Membrane</keyword>
<keyword id="KW-0762">Sugar transport</keyword>
<keyword id="KW-0812">Transmembrane</keyword>
<keyword id="KW-1133">Transmembrane helix</keyword>
<keyword id="KW-0813">Transport</keyword>
<name>NANT_ECODH</name>
<sequence length="496" mass="53551">MSTTTQNIPWYRHLNRAQWRAFSAAWLGYLLDGFDFVLIALVLTEVQGEFGLTTVQAASLISAAFISRWFGGLMLGAMGDRYGRRLAMVTSIVLFSAGTLACGFAPGYITMFIARLVIGMGMAGEYGSSATYVIESWPKHLRNKASGFLISGFSVGAVVAAQVYSLVVPVWGWRALFFIGILPIIFALWLRKNIPEAEDWKEKHAGKAPVRTMVDILYRGEHRIANIVMTLAAATALWFCFAGNLQNAAIVAVLGLLCAAIFISFMVQSAGKRWPTGVMLMVVVLFAFLYSWPIQALLPTYLKTDLAYNPHTVANVLFFSGFGAAVGCCVGGFLGDWLGTRKAYVCSLLASQLLIIPVFAIGGANVWVLGLLLFFQQMLGQGIAGILPKLIGGYFDTDQRAAGLGFTYNVGALGGALAPIIGALIAQRLDLGTALASLSFSLTFVVILLIGLDMPSRVQRWLRPEALRTHDAIDGKPFSGAVPFGSAKNDLVKTKS</sequence>
<dbReference type="EMBL" id="CP000948">
    <property type="protein sequence ID" value="ACB04298.1"/>
    <property type="molecule type" value="Genomic_DNA"/>
</dbReference>
<dbReference type="RefSeq" id="WP_000108454.1">
    <property type="nucleotide sequence ID" value="NC_010473.1"/>
</dbReference>
<dbReference type="SMR" id="B1XHJ7"/>
<dbReference type="KEGG" id="ecd:ECDH10B_3401"/>
<dbReference type="HOGENOM" id="CLU_001265_46_8_6"/>
<dbReference type="GO" id="GO:0005886">
    <property type="term" value="C:plasma membrane"/>
    <property type="evidence" value="ECO:0007669"/>
    <property type="project" value="UniProtKB-SubCell"/>
</dbReference>
<dbReference type="GO" id="GO:0046943">
    <property type="term" value="F:carboxylic acid transmembrane transporter activity"/>
    <property type="evidence" value="ECO:0007669"/>
    <property type="project" value="TreeGrafter"/>
</dbReference>
<dbReference type="GO" id="GO:0015538">
    <property type="term" value="F:sialic acid:proton symporter activity"/>
    <property type="evidence" value="ECO:0007669"/>
    <property type="project" value="UniProtKB-UniRule"/>
</dbReference>
<dbReference type="CDD" id="cd17316">
    <property type="entry name" value="MFS_SV2_like"/>
    <property type="match status" value="1"/>
</dbReference>
<dbReference type="FunFam" id="1.20.1250.20:FF:000027">
    <property type="entry name" value="Sialic acid transporter NanT"/>
    <property type="match status" value="1"/>
</dbReference>
<dbReference type="FunFam" id="1.20.1250.20:FF:000038">
    <property type="entry name" value="Sialic acid transporter NanT"/>
    <property type="match status" value="1"/>
</dbReference>
<dbReference type="Gene3D" id="1.20.1250.20">
    <property type="entry name" value="MFS general substrate transporter like domains"/>
    <property type="match status" value="2"/>
</dbReference>
<dbReference type="HAMAP" id="MF_01238">
    <property type="entry name" value="MFS_NanT"/>
    <property type="match status" value="1"/>
</dbReference>
<dbReference type="InterPro" id="IPR011701">
    <property type="entry name" value="MFS"/>
</dbReference>
<dbReference type="InterPro" id="IPR020846">
    <property type="entry name" value="MFS_dom"/>
</dbReference>
<dbReference type="InterPro" id="IPR036259">
    <property type="entry name" value="MFS_trans_sf"/>
</dbReference>
<dbReference type="InterPro" id="IPR004742">
    <property type="entry name" value="SA_transporter"/>
</dbReference>
<dbReference type="NCBIfam" id="TIGR00891">
    <property type="entry name" value="2A0112"/>
    <property type="match status" value="1"/>
</dbReference>
<dbReference type="NCBIfam" id="NF003024">
    <property type="entry name" value="PRK03893.1"/>
    <property type="match status" value="1"/>
</dbReference>
<dbReference type="PANTHER" id="PTHR23508">
    <property type="entry name" value="CARBOXYLIC ACID TRANSPORTER PROTEIN HOMOLOG"/>
    <property type="match status" value="1"/>
</dbReference>
<dbReference type="PANTHER" id="PTHR23508:SF3">
    <property type="entry name" value="SIALIC ACID TRANSPORTER NANT"/>
    <property type="match status" value="1"/>
</dbReference>
<dbReference type="Pfam" id="PF07690">
    <property type="entry name" value="MFS_1"/>
    <property type="match status" value="1"/>
</dbReference>
<dbReference type="SUPFAM" id="SSF103473">
    <property type="entry name" value="MFS general substrate transporter"/>
    <property type="match status" value="1"/>
</dbReference>
<dbReference type="PROSITE" id="PS50850">
    <property type="entry name" value="MFS"/>
    <property type="match status" value="1"/>
</dbReference>
<proteinExistence type="inferred from homology"/>
<organism>
    <name type="scientific">Escherichia coli (strain K12 / DH10B)</name>
    <dbReference type="NCBI Taxonomy" id="316385"/>
    <lineage>
        <taxon>Bacteria</taxon>
        <taxon>Pseudomonadati</taxon>
        <taxon>Pseudomonadota</taxon>
        <taxon>Gammaproteobacteria</taxon>
        <taxon>Enterobacterales</taxon>
        <taxon>Enterobacteriaceae</taxon>
        <taxon>Escherichia</taxon>
    </lineage>
</organism>
<reference key="1">
    <citation type="journal article" date="2008" name="J. Bacteriol.">
        <title>The complete genome sequence of Escherichia coli DH10B: insights into the biology of a laboratory workhorse.</title>
        <authorList>
            <person name="Durfee T."/>
            <person name="Nelson R."/>
            <person name="Baldwin S."/>
            <person name="Plunkett G. III"/>
            <person name="Burland V."/>
            <person name="Mau B."/>
            <person name="Petrosino J.F."/>
            <person name="Qin X."/>
            <person name="Muzny D.M."/>
            <person name="Ayele M."/>
            <person name="Gibbs R.A."/>
            <person name="Csorgo B."/>
            <person name="Posfai G."/>
            <person name="Weinstock G.M."/>
            <person name="Blattner F.R."/>
        </authorList>
    </citation>
    <scope>NUCLEOTIDE SEQUENCE [LARGE SCALE GENOMIC DNA]</scope>
    <source>
        <strain>K12 / DH10B</strain>
    </source>
</reference>
<feature type="chain" id="PRO_1000214047" description="Sialic acid transporter NanT">
    <location>
        <begin position="1"/>
        <end position="496"/>
    </location>
</feature>
<feature type="transmembrane region" description="Helical" evidence="1">
    <location>
        <begin position="22"/>
        <end position="42"/>
    </location>
</feature>
<feature type="transmembrane region" description="Helical" evidence="1">
    <location>
        <begin position="58"/>
        <end position="78"/>
    </location>
</feature>
<feature type="transmembrane region" description="Helical" evidence="1">
    <location>
        <begin position="92"/>
        <end position="112"/>
    </location>
</feature>
<feature type="transmembrane region" description="Helical" evidence="1">
    <location>
        <begin position="116"/>
        <end position="136"/>
    </location>
</feature>
<feature type="transmembrane region" description="Helical" evidence="1">
    <location>
        <begin position="148"/>
        <end position="168"/>
    </location>
</feature>
<feature type="transmembrane region" description="Helical" evidence="1">
    <location>
        <begin position="170"/>
        <end position="190"/>
    </location>
</feature>
<feature type="transmembrane region" description="Helical" evidence="1">
    <location>
        <begin position="224"/>
        <end position="244"/>
    </location>
</feature>
<feature type="transmembrane region" description="Helical" evidence="1">
    <location>
        <begin position="247"/>
        <end position="267"/>
    </location>
</feature>
<feature type="transmembrane region" description="Helical" evidence="1">
    <location>
        <begin position="278"/>
        <end position="298"/>
    </location>
</feature>
<feature type="transmembrane region" description="Helical" evidence="1">
    <location>
        <begin position="313"/>
        <end position="333"/>
    </location>
</feature>
<feature type="transmembrane region" description="Helical" evidence="1">
    <location>
        <begin position="353"/>
        <end position="375"/>
    </location>
</feature>
<feature type="transmembrane region" description="Helical" evidence="1">
    <location>
        <begin position="406"/>
        <end position="426"/>
    </location>
</feature>
<feature type="transmembrane region" description="Helical" evidence="1">
    <location>
        <begin position="431"/>
        <end position="451"/>
    </location>
</feature>